<keyword id="KW-0025">Alternative splicing</keyword>
<keyword id="KW-1015">Disulfide bond</keyword>
<keyword id="KW-0325">Glycoprotein</keyword>
<keyword id="KW-1032">Host cell membrane</keyword>
<keyword id="KW-1043">Host membrane</keyword>
<keyword id="KW-0945">Host-virus interaction</keyword>
<keyword id="KW-0375">Hydrogen ion transport</keyword>
<keyword id="KW-1083">Inhibition of host autophagy by virus</keyword>
<keyword id="KW-0407">Ion channel</keyword>
<keyword id="KW-0406">Ion transport</keyword>
<keyword id="KW-0449">Lipoprotein</keyword>
<keyword id="KW-0472">Membrane</keyword>
<keyword id="KW-0564">Palmitate</keyword>
<keyword id="KW-0597">Phosphoprotein</keyword>
<keyword id="KW-0735">Signal-anchor</keyword>
<keyword id="KW-0812">Transmembrane</keyword>
<keyword id="KW-1133">Transmembrane helix</keyword>
<keyword id="KW-0813">Transport</keyword>
<keyword id="KW-1182">Viral ion channel</keyword>
<keyword id="KW-0946">Virion</keyword>
<gene>
    <name evidence="1" type="primary">M</name>
</gene>
<sequence>MSLLTEVETPIRNEWGCRCNDSSDSLVVAASIIGILHLILWILDRLFFKCIYRFFKHGLKRGPSTEGVPESMREEYRKEQQNAVDADDSHFVSIELE</sequence>
<accession>Q8QV59</accession>
<accession>Q82750</accession>
<accession>Q8QV57</accession>
<reference key="1">
    <citation type="submission" date="2001-02" db="EMBL/GenBank/DDBJ databases">
        <authorList>
            <person name="Brown E.G."/>
            <person name="Liu H."/>
            <person name="Baird S."/>
            <person name="Chang Kit L."/>
            <person name="Nesrallah M."/>
        </authorList>
    </citation>
    <scope>NUCLEOTIDE SEQUENCE [GENOMIC RNA]</scope>
    <source>
        <strain>Isolate mouse-adapted</strain>
        <strain>Isolate wild-type</strain>
    </source>
</reference>
<reference key="2">
    <citation type="submission" date="1994-04" db="EMBL/GenBank/DDBJ databases">
        <authorList>
            <person name="Ward A.C."/>
        </authorList>
    </citation>
    <scope>NUCLEOTIDE SEQUENCE [MRNA]</scope>
    <source>
        <strain>Isolate A/Philippines/2/82/BS</strain>
    </source>
</reference>
<evidence type="ECO:0000255" key="1">
    <source>
        <dbReference type="HAMAP-Rule" id="MF_04069"/>
    </source>
</evidence>
<evidence type="ECO:0000256" key="2">
    <source>
        <dbReference type="SAM" id="MobiDB-lite"/>
    </source>
</evidence>
<protein>
    <recommendedName>
        <fullName evidence="1">Matrix protein 2</fullName>
    </recommendedName>
    <alternativeName>
        <fullName evidence="1">Proton channel protein M2</fullName>
    </alternativeName>
</protein>
<comment type="function">
    <text evidence="1">Forms a proton-selective ion channel that is necessary for the efficient release of the viral genome during virus entry. After attaching to the cell surface, the virion enters the cell by endocytosis. Acidification of the endosome triggers M2 ion channel activity. The influx of protons into virion interior is believed to disrupt interactions between the viral ribonucleoprotein (RNP), matrix protein 1 (M1), and lipid bilayers, thereby freeing the viral genome from interaction with viral proteins and enabling RNA segments to migrate to the host cell nucleus, where influenza virus RNA transcription and replication occur. Also plays a role in viral proteins secretory pathway. Elevates the intravesicular pH of normally acidic compartments, such as trans-Golgi network, preventing newly formed hemagglutinin from premature switching to the fusion-active conformation.</text>
</comment>
<comment type="activity regulation">
    <text>The M2 protein from most influenza A strains is inhibited by amantadine and rimantadine, resulting in viral uncoating incapacity. Emergence of amantadine-resistant variants is usually rapid.</text>
</comment>
<comment type="subunit">
    <text evidence="1">Homotetramer; composed of two disulfide-linked dimers held together by non-covalent interactions. May interact with matrix protein 1.</text>
</comment>
<comment type="subcellular location">
    <subcellularLocation>
        <location evidence="1">Virion membrane</location>
    </subcellularLocation>
    <subcellularLocation>
        <location evidence="1">Host apical cell membrane</location>
        <topology evidence="1">Single-pass type III membrane protein</topology>
    </subcellularLocation>
    <text evidence="1">Abundantly expressed at the apical plasma membrane in infected polarized epithelial cells, in close proximity to budding and assembled virions. Minor component of virions (only 16-20 molecules/virion).</text>
</comment>
<comment type="alternative products">
    <event type="alternative splicing"/>
    <isoform>
        <id>Q8QV59-1</id>
        <name>M2</name>
        <sequence type="displayed"/>
    </isoform>
    <isoform>
        <id>Q8QV58-1</id>
        <name>M1</name>
        <sequence type="external"/>
    </isoform>
    <text>Only the first 9 residues are shared by the 2 isoforms.</text>
</comment>
<comment type="domain">
    <text evidence="1">Cytoplasmic tail plays an important role in virion assembly and morphogenesis.</text>
</comment>
<comment type="miscellaneous">
    <text evidence="1">When the channel is activated, one or more imidazole moieties of His-37 probably become bi-protonated.</text>
</comment>
<comment type="similarity">
    <text evidence="1">Belongs to the influenza viruses matrix protein M2 family.</text>
</comment>
<dbReference type="EMBL" id="AF348912">
    <property type="protein sequence ID" value="AAM09297.1"/>
    <property type="molecule type" value="Genomic_RNA"/>
</dbReference>
<dbReference type="EMBL" id="AF348913">
    <property type="protein sequence ID" value="AAM09299.1"/>
    <property type="molecule type" value="Genomic_RNA"/>
</dbReference>
<dbReference type="EMBL" id="U08863">
    <property type="protein sequence ID" value="AAC79578.1"/>
    <property type="molecule type" value="mRNA"/>
</dbReference>
<dbReference type="SMR" id="Q8QV59"/>
<dbReference type="GlyCosmos" id="Q8QV59">
    <property type="glycosylation" value="1 site, No reported glycans"/>
</dbReference>
<dbReference type="GO" id="GO:0020002">
    <property type="term" value="C:host cell plasma membrane"/>
    <property type="evidence" value="ECO:0007669"/>
    <property type="project" value="UniProtKB-SubCell"/>
</dbReference>
<dbReference type="GO" id="GO:0016020">
    <property type="term" value="C:membrane"/>
    <property type="evidence" value="ECO:0007669"/>
    <property type="project" value="UniProtKB-UniRule"/>
</dbReference>
<dbReference type="GO" id="GO:0055036">
    <property type="term" value="C:virion membrane"/>
    <property type="evidence" value="ECO:0007669"/>
    <property type="project" value="UniProtKB-SubCell"/>
</dbReference>
<dbReference type="GO" id="GO:0005216">
    <property type="term" value="F:monoatomic ion channel activity"/>
    <property type="evidence" value="ECO:0007669"/>
    <property type="project" value="UniProtKB-UniRule"/>
</dbReference>
<dbReference type="GO" id="GO:0015078">
    <property type="term" value="F:proton transmembrane transporter activity"/>
    <property type="evidence" value="ECO:0007669"/>
    <property type="project" value="UniProtKB-UniRule"/>
</dbReference>
<dbReference type="GO" id="GO:0051259">
    <property type="term" value="P:protein complex oligomerization"/>
    <property type="evidence" value="ECO:0007669"/>
    <property type="project" value="UniProtKB-UniRule"/>
</dbReference>
<dbReference type="GO" id="GO:0044694">
    <property type="term" value="P:symbiont genome entry into host cell via pore formation in plasma membrane"/>
    <property type="evidence" value="ECO:0007669"/>
    <property type="project" value="UniProtKB-UniRule"/>
</dbReference>
<dbReference type="GO" id="GO:0140321">
    <property type="term" value="P:symbiont-mediated suppression of host autophagy"/>
    <property type="evidence" value="ECO:0007669"/>
    <property type="project" value="UniProtKB-KW"/>
</dbReference>
<dbReference type="Gene3D" id="6.10.250.1640">
    <property type="match status" value="1"/>
</dbReference>
<dbReference type="HAMAP" id="MF_04069">
    <property type="entry name" value="INFV_M2"/>
    <property type="match status" value="1"/>
</dbReference>
<dbReference type="InterPro" id="IPR002089">
    <property type="entry name" value="Flu_M2"/>
</dbReference>
<dbReference type="Pfam" id="PF00599">
    <property type="entry name" value="Flu_M2"/>
    <property type="match status" value="1"/>
</dbReference>
<organismHost>
    <name type="scientific">Aves</name>
    <dbReference type="NCBI Taxonomy" id="8782"/>
</organismHost>
<organismHost>
    <name type="scientific">Cetacea</name>
    <name type="common">whales</name>
    <dbReference type="NCBI Taxonomy" id="9721"/>
</organismHost>
<organismHost>
    <name type="scientific">Homo sapiens</name>
    <name type="common">Human</name>
    <dbReference type="NCBI Taxonomy" id="9606"/>
</organismHost>
<organismHost>
    <name type="scientific">Phocidae</name>
    <name type="common">true seals</name>
    <dbReference type="NCBI Taxonomy" id="9709"/>
</organismHost>
<organismHost>
    <name type="scientific">Sus scrofa</name>
    <name type="common">Pig</name>
    <dbReference type="NCBI Taxonomy" id="9823"/>
</organismHost>
<feature type="chain" id="PRO_0000223624" description="Matrix protein 2">
    <location>
        <begin position="1"/>
        <end position="97"/>
    </location>
</feature>
<feature type="topological domain" description="Virion surface" evidence="1">
    <location>
        <begin position="1"/>
        <end position="22"/>
    </location>
</feature>
<feature type="transmembrane region" description="Helical; Signal-anchor for type III membrane protein" evidence="1">
    <location>
        <begin position="23"/>
        <end position="43"/>
    </location>
</feature>
<feature type="topological domain" description="Intravirion" evidence="1">
    <location>
        <begin position="44"/>
        <end position="97"/>
    </location>
</feature>
<feature type="region of interest" description="Disordered" evidence="2">
    <location>
        <begin position="59"/>
        <end position="88"/>
    </location>
</feature>
<feature type="compositionally biased region" description="Basic and acidic residues" evidence="2">
    <location>
        <begin position="71"/>
        <end position="80"/>
    </location>
</feature>
<feature type="site" description="Essential for channel activity, possibly by being protonated during channel activation, and by forming the channel gate and the selective filter" evidence="1">
    <location>
        <position position="37"/>
    </location>
</feature>
<feature type="site" description="Seems to be involved in pH gating" evidence="1">
    <location>
        <position position="41"/>
    </location>
</feature>
<feature type="modified residue" description="Phosphoserine; by host" evidence="1">
    <location>
        <position position="64"/>
    </location>
</feature>
<feature type="modified residue" description="Phosphoserine; by host" evidence="1">
    <location>
        <position position="93"/>
    </location>
</feature>
<feature type="lipid moiety-binding region" description="S-palmitoyl cysteine; by host" evidence="1">
    <location>
        <position position="50"/>
    </location>
</feature>
<feature type="glycosylation site" description="N-linked (GlcNAc...) asparagine; by host" evidence="1">
    <location>
        <position position="20"/>
    </location>
</feature>
<feature type="disulfide bond" description="Interchain (with C-17)" evidence="1">
    <location>
        <position position="17"/>
    </location>
</feature>
<feature type="disulfide bond" description="Interchain (with C-19)" evidence="1">
    <location>
        <position position="19"/>
    </location>
</feature>
<feature type="sequence variant" description="In strain: isolate A/Philippines/2/82/BS.">
    <original>D</original>
    <variation>G</variation>
    <location>
        <position position="21"/>
    </location>
</feature>
<feature type="sequence variant" description="In strain: isolate A/Philippines/2/82/BS.">
    <original>SLVVAAS</original>
    <variation>PLTIAAN</variation>
    <location>
        <begin position="25"/>
        <end position="31"/>
    </location>
</feature>
<feature type="sequence variant" description="In strain: isolate A/Philippines/2/82/BS.">
    <original>I</original>
    <variation>T</variation>
    <location>
        <position position="39"/>
    </location>
</feature>
<feature type="sequence variant" description="In strain: isolate A/Philippines/2/82/BS.">
    <original>F</original>
    <variation>R</variation>
    <location>
        <position position="54"/>
    </location>
</feature>
<feature type="sequence variant" description="In strain: isolate A/Philippines/2/82/BS.">
    <original>H</original>
    <variation>Y</variation>
    <location>
        <position position="57"/>
    </location>
</feature>
<feature type="sequence variant" description="In strain: isolate A/Philippines/2/82/BS.">
    <original>R</original>
    <variation>G</variation>
    <location>
        <position position="61"/>
    </location>
</feature>
<feature type="sequence variant" description="In strain: isolate A/Philippines/2/82/BS.">
    <original>E</original>
    <variation>K</variation>
    <location>
        <position position="70"/>
    </location>
</feature>
<feature type="sequence variant" description="In strain: isolate A/Philippines/2/82/BS.">
    <original>N</original>
    <variation>S</variation>
    <location>
        <position position="82"/>
    </location>
</feature>
<feature type="sequence variant" description="In strain: isolate A/Philippines/2/82/BS.">
    <original>S</original>
    <variation>G</variation>
    <location>
        <position position="89"/>
    </location>
</feature>
<name>M2_I82A9</name>
<proteinExistence type="inferred from homology"/>
<organism>
    <name type="scientific">Influenza A virus (strain A/Philippines/2/1982 H3N2)</name>
    <dbReference type="NCBI Taxonomy" id="382825"/>
    <lineage>
        <taxon>Viruses</taxon>
        <taxon>Riboviria</taxon>
        <taxon>Orthornavirae</taxon>
        <taxon>Negarnaviricota</taxon>
        <taxon>Polyploviricotina</taxon>
        <taxon>Insthoviricetes</taxon>
        <taxon>Articulavirales</taxon>
        <taxon>Orthomyxoviridae</taxon>
        <taxon>Alphainfluenzavirus</taxon>
        <taxon>Alphainfluenzavirus influenzae</taxon>
        <taxon>Influenza A virus</taxon>
    </lineage>
</organism>